<feature type="chain" id="PRO_1000199094" description="Glutamine--tRNA ligase">
    <location>
        <begin position="1"/>
        <end position="554"/>
    </location>
</feature>
<feature type="region of interest" description="Interaction with tRNA" evidence="1">
    <location>
        <begin position="317"/>
        <end position="324"/>
    </location>
</feature>
<feature type="short sequence motif" description="'HIGH' region" evidence="1">
    <location>
        <begin position="34"/>
        <end position="44"/>
    </location>
</feature>
<feature type="short sequence motif" description="'KMSKS' region" evidence="1">
    <location>
        <begin position="268"/>
        <end position="272"/>
    </location>
</feature>
<feature type="binding site" evidence="1">
    <location>
        <begin position="35"/>
        <end position="37"/>
    </location>
    <ligand>
        <name>ATP</name>
        <dbReference type="ChEBI" id="CHEBI:30616"/>
    </ligand>
</feature>
<feature type="binding site" evidence="1">
    <location>
        <begin position="41"/>
        <end position="47"/>
    </location>
    <ligand>
        <name>ATP</name>
        <dbReference type="ChEBI" id="CHEBI:30616"/>
    </ligand>
</feature>
<feature type="binding site" evidence="1">
    <location>
        <position position="67"/>
    </location>
    <ligand>
        <name>L-glutamine</name>
        <dbReference type="ChEBI" id="CHEBI:58359"/>
    </ligand>
</feature>
<feature type="binding site" evidence="1">
    <location>
        <position position="212"/>
    </location>
    <ligand>
        <name>L-glutamine</name>
        <dbReference type="ChEBI" id="CHEBI:58359"/>
    </ligand>
</feature>
<feature type="binding site" evidence="1">
    <location>
        <position position="231"/>
    </location>
    <ligand>
        <name>ATP</name>
        <dbReference type="ChEBI" id="CHEBI:30616"/>
    </ligand>
</feature>
<feature type="binding site" evidence="1">
    <location>
        <begin position="261"/>
        <end position="262"/>
    </location>
    <ligand>
        <name>ATP</name>
        <dbReference type="ChEBI" id="CHEBI:30616"/>
    </ligand>
</feature>
<feature type="binding site" evidence="1">
    <location>
        <begin position="269"/>
        <end position="271"/>
    </location>
    <ligand>
        <name>ATP</name>
        <dbReference type="ChEBI" id="CHEBI:30616"/>
    </ligand>
</feature>
<proteinExistence type="inferred from homology"/>
<name>SYQ_ECOSM</name>
<evidence type="ECO:0000255" key="1">
    <source>
        <dbReference type="HAMAP-Rule" id="MF_00126"/>
    </source>
</evidence>
<comment type="catalytic activity">
    <reaction evidence="1">
        <text>tRNA(Gln) + L-glutamine + ATP = L-glutaminyl-tRNA(Gln) + AMP + diphosphate</text>
        <dbReference type="Rhea" id="RHEA:20121"/>
        <dbReference type="Rhea" id="RHEA-COMP:9662"/>
        <dbReference type="Rhea" id="RHEA-COMP:9681"/>
        <dbReference type="ChEBI" id="CHEBI:30616"/>
        <dbReference type="ChEBI" id="CHEBI:33019"/>
        <dbReference type="ChEBI" id="CHEBI:58359"/>
        <dbReference type="ChEBI" id="CHEBI:78442"/>
        <dbReference type="ChEBI" id="CHEBI:78521"/>
        <dbReference type="ChEBI" id="CHEBI:456215"/>
        <dbReference type="EC" id="6.1.1.18"/>
    </reaction>
</comment>
<comment type="subunit">
    <text evidence="1">Monomer.</text>
</comment>
<comment type="subcellular location">
    <subcellularLocation>
        <location evidence="1">Cytoplasm</location>
    </subcellularLocation>
</comment>
<comment type="similarity">
    <text evidence="1">Belongs to the class-I aminoacyl-tRNA synthetase family.</text>
</comment>
<reference key="1">
    <citation type="journal article" date="2008" name="J. Bacteriol.">
        <title>Insights into the environmental resistance gene pool from the genome sequence of the multidrug-resistant environmental isolate Escherichia coli SMS-3-5.</title>
        <authorList>
            <person name="Fricke W.F."/>
            <person name="Wright M.S."/>
            <person name="Lindell A.H."/>
            <person name="Harkins D.M."/>
            <person name="Baker-Austin C."/>
            <person name="Ravel J."/>
            <person name="Stepanauskas R."/>
        </authorList>
    </citation>
    <scope>NUCLEOTIDE SEQUENCE [LARGE SCALE GENOMIC DNA]</scope>
    <source>
        <strain>SMS-3-5 / SECEC</strain>
    </source>
</reference>
<protein>
    <recommendedName>
        <fullName evidence="1">Glutamine--tRNA ligase</fullName>
        <ecNumber evidence="1">6.1.1.18</ecNumber>
    </recommendedName>
    <alternativeName>
        <fullName evidence="1">Glutaminyl-tRNA synthetase</fullName>
        <shortName evidence="1">GlnRS</shortName>
    </alternativeName>
</protein>
<dbReference type="EC" id="6.1.1.18" evidence="1"/>
<dbReference type="EMBL" id="CP000970">
    <property type="protein sequence ID" value="ACB17565.1"/>
    <property type="molecule type" value="Genomic_DNA"/>
</dbReference>
<dbReference type="RefSeq" id="WP_001287164.1">
    <property type="nucleotide sequence ID" value="NC_010498.1"/>
</dbReference>
<dbReference type="SMR" id="B1LLC4"/>
<dbReference type="GeneID" id="75056538"/>
<dbReference type="KEGG" id="ecm:EcSMS35_0702"/>
<dbReference type="HOGENOM" id="CLU_001882_2_3_6"/>
<dbReference type="Proteomes" id="UP000007011">
    <property type="component" value="Chromosome"/>
</dbReference>
<dbReference type="GO" id="GO:0005829">
    <property type="term" value="C:cytosol"/>
    <property type="evidence" value="ECO:0007669"/>
    <property type="project" value="TreeGrafter"/>
</dbReference>
<dbReference type="GO" id="GO:0005524">
    <property type="term" value="F:ATP binding"/>
    <property type="evidence" value="ECO:0007669"/>
    <property type="project" value="UniProtKB-UniRule"/>
</dbReference>
<dbReference type="GO" id="GO:0004819">
    <property type="term" value="F:glutamine-tRNA ligase activity"/>
    <property type="evidence" value="ECO:0007669"/>
    <property type="project" value="UniProtKB-UniRule"/>
</dbReference>
<dbReference type="GO" id="GO:0006425">
    <property type="term" value="P:glutaminyl-tRNA aminoacylation"/>
    <property type="evidence" value="ECO:0007669"/>
    <property type="project" value="InterPro"/>
</dbReference>
<dbReference type="GO" id="GO:0006424">
    <property type="term" value="P:glutamyl-tRNA aminoacylation"/>
    <property type="evidence" value="ECO:0007669"/>
    <property type="project" value="UniProtKB-UniRule"/>
</dbReference>
<dbReference type="CDD" id="cd00807">
    <property type="entry name" value="GlnRS_core"/>
    <property type="match status" value="1"/>
</dbReference>
<dbReference type="FunFam" id="1.10.1160.10:FF:000001">
    <property type="entry name" value="Glutamine--tRNA ligase"/>
    <property type="match status" value="1"/>
</dbReference>
<dbReference type="FunFam" id="2.40.240.10:FF:000001">
    <property type="entry name" value="Glutamine--tRNA ligase"/>
    <property type="match status" value="1"/>
</dbReference>
<dbReference type="FunFam" id="2.40.240.10:FF:000003">
    <property type="entry name" value="Glutamine--tRNA ligase"/>
    <property type="match status" value="1"/>
</dbReference>
<dbReference type="FunFam" id="3.90.800.10:FF:000001">
    <property type="entry name" value="Glutamine--tRNA ligase"/>
    <property type="match status" value="1"/>
</dbReference>
<dbReference type="FunFam" id="3.40.50.620:FF:000037">
    <property type="entry name" value="Glutamine--tRNA ligase cytoplasmic"/>
    <property type="match status" value="1"/>
</dbReference>
<dbReference type="Gene3D" id="1.10.1160.10">
    <property type="entry name" value="Glutamyl-trna Synthetase, Domain 2"/>
    <property type="match status" value="1"/>
</dbReference>
<dbReference type="Gene3D" id="3.90.800.10">
    <property type="entry name" value="Glutamyl-tRNA Synthetase, Domain 3"/>
    <property type="match status" value="1"/>
</dbReference>
<dbReference type="Gene3D" id="3.40.50.620">
    <property type="entry name" value="HUPs"/>
    <property type="match status" value="1"/>
</dbReference>
<dbReference type="Gene3D" id="2.40.240.10">
    <property type="entry name" value="Ribosomal Protein L25, Chain P"/>
    <property type="match status" value="2"/>
</dbReference>
<dbReference type="HAMAP" id="MF_00126">
    <property type="entry name" value="Gln_tRNA_synth"/>
    <property type="match status" value="1"/>
</dbReference>
<dbReference type="InterPro" id="IPR001412">
    <property type="entry name" value="aa-tRNA-synth_I_CS"/>
</dbReference>
<dbReference type="InterPro" id="IPR004514">
    <property type="entry name" value="Gln-tRNA-synth"/>
</dbReference>
<dbReference type="InterPro" id="IPR050132">
    <property type="entry name" value="Gln/Glu-tRNA_Ligase"/>
</dbReference>
<dbReference type="InterPro" id="IPR022861">
    <property type="entry name" value="Gln_tRNA_ligase_bac"/>
</dbReference>
<dbReference type="InterPro" id="IPR000924">
    <property type="entry name" value="Glu/Gln-tRNA-synth"/>
</dbReference>
<dbReference type="InterPro" id="IPR020058">
    <property type="entry name" value="Glu/Gln-tRNA-synth_Ib_cat-dom"/>
</dbReference>
<dbReference type="InterPro" id="IPR020059">
    <property type="entry name" value="Glu/Gln-tRNA-synth_Ib_codon-bd"/>
</dbReference>
<dbReference type="InterPro" id="IPR020061">
    <property type="entry name" value="Glu_tRNA_lig_a-bdl"/>
</dbReference>
<dbReference type="InterPro" id="IPR020056">
    <property type="entry name" value="Rbsml_bL25/Gln-tRNA_synth_N"/>
</dbReference>
<dbReference type="InterPro" id="IPR011035">
    <property type="entry name" value="Ribosomal_bL25/Gln-tRNA_synth"/>
</dbReference>
<dbReference type="InterPro" id="IPR014729">
    <property type="entry name" value="Rossmann-like_a/b/a_fold"/>
</dbReference>
<dbReference type="InterPro" id="IPR049437">
    <property type="entry name" value="tRNA-synt_1c_C2"/>
</dbReference>
<dbReference type="NCBIfam" id="TIGR00440">
    <property type="entry name" value="glnS"/>
    <property type="match status" value="1"/>
</dbReference>
<dbReference type="NCBIfam" id="NF011291">
    <property type="entry name" value="PRK14703.1"/>
    <property type="match status" value="1"/>
</dbReference>
<dbReference type="PANTHER" id="PTHR43097:SF5">
    <property type="entry name" value="GLUTAMATE--TRNA LIGASE"/>
    <property type="match status" value="1"/>
</dbReference>
<dbReference type="PANTHER" id="PTHR43097">
    <property type="entry name" value="GLUTAMINE-TRNA LIGASE"/>
    <property type="match status" value="1"/>
</dbReference>
<dbReference type="Pfam" id="PF00749">
    <property type="entry name" value="tRNA-synt_1c"/>
    <property type="match status" value="1"/>
</dbReference>
<dbReference type="Pfam" id="PF03950">
    <property type="entry name" value="tRNA-synt_1c_C"/>
    <property type="match status" value="1"/>
</dbReference>
<dbReference type="Pfam" id="PF20974">
    <property type="entry name" value="tRNA-synt_1c_C2"/>
    <property type="match status" value="1"/>
</dbReference>
<dbReference type="PRINTS" id="PR00987">
    <property type="entry name" value="TRNASYNTHGLU"/>
</dbReference>
<dbReference type="SUPFAM" id="SSF52374">
    <property type="entry name" value="Nucleotidylyl transferase"/>
    <property type="match status" value="1"/>
</dbReference>
<dbReference type="SUPFAM" id="SSF50715">
    <property type="entry name" value="Ribosomal protein L25-like"/>
    <property type="match status" value="1"/>
</dbReference>
<dbReference type="PROSITE" id="PS00178">
    <property type="entry name" value="AA_TRNA_LIGASE_I"/>
    <property type="match status" value="1"/>
</dbReference>
<sequence>MSEAEARPTNFIRQIIDEDLASGKHTTVHTRFPPEPNGYLHIGHAKSICLNFGIAQDYKGQCNLRFDDTNPVKEDIEYVESIKNDVEWLGFHWSGNVRYSSDYFDQLHAYAIELINKGLAYVDELTPEQIREYRGTLTQPGKNSPYRDRSVEENLALFEKMRTGGFEEGKACLRAKIDMASPFIVMRDPVLYRIKFAEHHQTGNKWCIYPMYDFTHCISDALEGITHSLCTLEFQDNRRLYDWVLDNITIPVHPRQYEFSRLNLEYTVMSKRKLNLLVTDKHVEGWDDPRMPTISGLRRRGYTAASIREFCKRIGVTKQDNTIEMASLESCIREDLNENAPRAMAVIDPVKLVIENYQGEGEMVTMPNHPNKPEMGSRQVPFSGEIWIDRADFREEANKQYKRLVLGKEVRLRNAYVIKAERVEKDAEGNITTIFCTYDADTLSKDPADGRKVKGVIHWVSAAHALPVEIRLYDRLFSVPNPGAADDFLSVINPESLVIKQGFAEPSLKDAVAGKAFQFEREGYFCLDSRHSTAEKPVFNRTVGLRDTWAKVGE</sequence>
<keyword id="KW-0030">Aminoacyl-tRNA synthetase</keyword>
<keyword id="KW-0067">ATP-binding</keyword>
<keyword id="KW-0963">Cytoplasm</keyword>
<keyword id="KW-0436">Ligase</keyword>
<keyword id="KW-0547">Nucleotide-binding</keyword>
<keyword id="KW-0648">Protein biosynthesis</keyword>
<organism>
    <name type="scientific">Escherichia coli (strain SMS-3-5 / SECEC)</name>
    <dbReference type="NCBI Taxonomy" id="439855"/>
    <lineage>
        <taxon>Bacteria</taxon>
        <taxon>Pseudomonadati</taxon>
        <taxon>Pseudomonadota</taxon>
        <taxon>Gammaproteobacteria</taxon>
        <taxon>Enterobacterales</taxon>
        <taxon>Enterobacteriaceae</taxon>
        <taxon>Escherichia</taxon>
    </lineage>
</organism>
<gene>
    <name evidence="1" type="primary">glnS</name>
    <name type="ordered locus">EcSMS35_0702</name>
</gene>
<accession>B1LLC4</accession>